<organism>
    <name type="scientific">Hemicentrotus pulcherrimus</name>
    <name type="common">Sea urchin</name>
    <name type="synonym">Strongylocentrotus pulcherrimus</name>
    <dbReference type="NCBI Taxonomy" id="7650"/>
    <lineage>
        <taxon>Eukaryota</taxon>
        <taxon>Metazoa</taxon>
        <taxon>Echinodermata</taxon>
        <taxon>Eleutherozoa</taxon>
        <taxon>Echinozoa</taxon>
        <taxon>Echinoidea</taxon>
        <taxon>Euechinoidea</taxon>
        <taxon>Echinacea</taxon>
        <taxon>Camarodonta</taxon>
        <taxon>Echinidea</taxon>
        <taxon>Strongylocentrotidae</taxon>
        <taxon>Hemicentrotus</taxon>
    </lineage>
</organism>
<accession>Q25117</accession>
<sequence length="523" mass="56075">MFSRVAKTSFSAVRAAKSQFSHSLSQQTSKTWVPAATCSKRSYAAEAKTSAAPVSGQIVAVIGAVVDVQFEDDLPPILNALEVQGRTSRLVLEVAQHLGENTVRTIAMDGTEGLIRGQKCVDTGSPISIPVGPETLGRIINVIGEPIDERGPIGTDRRSAIHAEAPEFVEMSVNQEILVTGIKVVDLLAPYAKGGKIGLFGGAGVGKTVLIMELINNVAKAHGGYSVFAGVGERTREGNDLYHEMIEGGVISLKDDTSKVALVYGQMNEPPGARARVALTGLTVAEYFRDQEGQDVLLFIDNIFRFTQAGSEVSALLGRIPSAVGYQPTLATDMGTMQERITTTKKGSITSVQAIYVPADDLTDPAPATTFAHLDATTVLSRGIAELGIYPAVDPLDSSSRIMDPNVVGERHYSIARGVQKILQDNKTLQDIIAILGMDELSEDDKLTVSRARKIQRFLSQPFQVAEVFTGSPGKLVSMAETIDGFESIIKGECDHLPEIAFYMVGNIQDVKDKADRLAEELS</sequence>
<feature type="transit peptide" description="Mitochondrion" evidence="1">
    <location>
        <begin position="1"/>
        <end position="19" status="uncertain"/>
    </location>
</feature>
<feature type="chain" id="PRO_0000002447" description="ATP synthase subunit beta, mitochondrial">
    <location>
        <begin position="20" status="uncertain"/>
        <end position="523"/>
    </location>
</feature>
<feature type="binding site" evidence="1">
    <location>
        <begin position="201"/>
        <end position="208"/>
    </location>
    <ligand>
        <name>ATP</name>
        <dbReference type="ChEBI" id="CHEBI:30616"/>
    </ligand>
</feature>
<proteinExistence type="evidence at transcript level"/>
<evidence type="ECO:0000255" key="1"/>
<evidence type="ECO:0000305" key="2"/>
<protein>
    <recommendedName>
        <fullName>ATP synthase subunit beta, mitochondrial</fullName>
        <ecNumber>7.1.2.2</ecNumber>
    </recommendedName>
</protein>
<dbReference type="EC" id="7.1.2.2"/>
<dbReference type="EMBL" id="D17361">
    <property type="protein sequence ID" value="BAA04178.1"/>
    <property type="molecule type" value="mRNA"/>
</dbReference>
<dbReference type="SMR" id="Q25117"/>
<dbReference type="GO" id="GO:0005743">
    <property type="term" value="C:mitochondrial inner membrane"/>
    <property type="evidence" value="ECO:0007669"/>
    <property type="project" value="UniProtKB-SubCell"/>
</dbReference>
<dbReference type="GO" id="GO:0045259">
    <property type="term" value="C:proton-transporting ATP synthase complex"/>
    <property type="evidence" value="ECO:0007669"/>
    <property type="project" value="UniProtKB-KW"/>
</dbReference>
<dbReference type="GO" id="GO:0005524">
    <property type="term" value="F:ATP binding"/>
    <property type="evidence" value="ECO:0007669"/>
    <property type="project" value="UniProtKB-KW"/>
</dbReference>
<dbReference type="GO" id="GO:0016887">
    <property type="term" value="F:ATP hydrolysis activity"/>
    <property type="evidence" value="ECO:0007669"/>
    <property type="project" value="InterPro"/>
</dbReference>
<dbReference type="GO" id="GO:0046933">
    <property type="term" value="F:proton-transporting ATP synthase activity, rotational mechanism"/>
    <property type="evidence" value="ECO:0007669"/>
    <property type="project" value="InterPro"/>
</dbReference>
<dbReference type="GO" id="GO:0042776">
    <property type="term" value="P:proton motive force-driven mitochondrial ATP synthesis"/>
    <property type="evidence" value="ECO:0007669"/>
    <property type="project" value="TreeGrafter"/>
</dbReference>
<dbReference type="CDD" id="cd18110">
    <property type="entry name" value="ATP-synt_F1_beta_C"/>
    <property type="match status" value="1"/>
</dbReference>
<dbReference type="CDD" id="cd18115">
    <property type="entry name" value="ATP-synt_F1_beta_N"/>
    <property type="match status" value="1"/>
</dbReference>
<dbReference type="CDD" id="cd01133">
    <property type="entry name" value="F1-ATPase_beta_CD"/>
    <property type="match status" value="1"/>
</dbReference>
<dbReference type="FunFam" id="1.10.1140.10:FF:000001">
    <property type="entry name" value="ATP synthase subunit beta"/>
    <property type="match status" value="1"/>
</dbReference>
<dbReference type="FunFam" id="2.40.10.170:FF:000004">
    <property type="entry name" value="ATP synthase subunit beta"/>
    <property type="match status" value="1"/>
</dbReference>
<dbReference type="FunFam" id="3.40.50.300:FF:000026">
    <property type="entry name" value="ATP synthase subunit beta"/>
    <property type="match status" value="1"/>
</dbReference>
<dbReference type="Gene3D" id="2.40.10.170">
    <property type="match status" value="1"/>
</dbReference>
<dbReference type="Gene3D" id="1.10.1140.10">
    <property type="entry name" value="Bovine Mitochondrial F1-atpase, Atp Synthase Beta Chain, Chain D, domain 3"/>
    <property type="match status" value="1"/>
</dbReference>
<dbReference type="Gene3D" id="3.40.50.300">
    <property type="entry name" value="P-loop containing nucleotide triphosphate hydrolases"/>
    <property type="match status" value="1"/>
</dbReference>
<dbReference type="HAMAP" id="MF_01347">
    <property type="entry name" value="ATP_synth_beta_bact"/>
    <property type="match status" value="1"/>
</dbReference>
<dbReference type="InterPro" id="IPR003593">
    <property type="entry name" value="AAA+_ATPase"/>
</dbReference>
<dbReference type="InterPro" id="IPR055190">
    <property type="entry name" value="ATP-synt_VA_C"/>
</dbReference>
<dbReference type="InterPro" id="IPR005722">
    <property type="entry name" value="ATP_synth_F1_bsu"/>
</dbReference>
<dbReference type="InterPro" id="IPR020003">
    <property type="entry name" value="ATPase_a/bsu_AS"/>
</dbReference>
<dbReference type="InterPro" id="IPR050053">
    <property type="entry name" value="ATPase_alpha/beta_chains"/>
</dbReference>
<dbReference type="InterPro" id="IPR004100">
    <property type="entry name" value="ATPase_F1/V1/A1_a/bsu_N"/>
</dbReference>
<dbReference type="InterPro" id="IPR036121">
    <property type="entry name" value="ATPase_F1/V1/A1_a/bsu_N_sf"/>
</dbReference>
<dbReference type="InterPro" id="IPR000194">
    <property type="entry name" value="ATPase_F1/V1/A1_a/bsu_nucl-bd"/>
</dbReference>
<dbReference type="InterPro" id="IPR024034">
    <property type="entry name" value="ATPase_F1/V1_b/a_C"/>
</dbReference>
<dbReference type="InterPro" id="IPR027417">
    <property type="entry name" value="P-loop_NTPase"/>
</dbReference>
<dbReference type="NCBIfam" id="TIGR01039">
    <property type="entry name" value="atpD"/>
    <property type="match status" value="1"/>
</dbReference>
<dbReference type="PANTHER" id="PTHR15184">
    <property type="entry name" value="ATP SYNTHASE"/>
    <property type="match status" value="1"/>
</dbReference>
<dbReference type="PANTHER" id="PTHR15184:SF71">
    <property type="entry name" value="ATP SYNTHASE SUBUNIT BETA, MITOCHONDRIAL"/>
    <property type="match status" value="1"/>
</dbReference>
<dbReference type="Pfam" id="PF00006">
    <property type="entry name" value="ATP-synt_ab"/>
    <property type="match status" value="1"/>
</dbReference>
<dbReference type="Pfam" id="PF02874">
    <property type="entry name" value="ATP-synt_ab_N"/>
    <property type="match status" value="1"/>
</dbReference>
<dbReference type="Pfam" id="PF22919">
    <property type="entry name" value="ATP-synt_VA_C"/>
    <property type="match status" value="1"/>
</dbReference>
<dbReference type="PIRSF" id="PIRSF039072">
    <property type="entry name" value="ATPase_subunit_beta"/>
    <property type="match status" value="1"/>
</dbReference>
<dbReference type="SMART" id="SM00382">
    <property type="entry name" value="AAA"/>
    <property type="match status" value="1"/>
</dbReference>
<dbReference type="SUPFAM" id="SSF47917">
    <property type="entry name" value="C-terminal domain of alpha and beta subunits of F1 ATP synthase"/>
    <property type="match status" value="1"/>
</dbReference>
<dbReference type="SUPFAM" id="SSF50615">
    <property type="entry name" value="N-terminal domain of alpha and beta subunits of F1 ATP synthase"/>
    <property type="match status" value="1"/>
</dbReference>
<dbReference type="SUPFAM" id="SSF52540">
    <property type="entry name" value="P-loop containing nucleoside triphosphate hydrolases"/>
    <property type="match status" value="1"/>
</dbReference>
<dbReference type="PROSITE" id="PS00152">
    <property type="entry name" value="ATPASE_ALPHA_BETA"/>
    <property type="match status" value="1"/>
</dbReference>
<reference key="1">
    <citation type="journal article" date="1994" name="Zool. Sci.">
        <title>Nucleotide sequence of the proton ATPase beta-subunit homologue of the sea urchin Hemicentrotus pulcherrimus.</title>
        <authorList>
            <person name="Satoh Y.I."/>
            <person name="Shimizu T."/>
            <person name="Sendai Y."/>
            <person name="Kinoh H."/>
            <person name="Suzuki N."/>
        </authorList>
    </citation>
    <scope>NUCLEOTIDE SEQUENCE [MRNA]</scope>
    <source>
        <tissue>Testis</tissue>
    </source>
</reference>
<comment type="function">
    <text>Mitochondrial membrane ATP synthase (F(1)F(0) ATP synthase or Complex V) produces ATP from ADP in the presence of a proton gradient across the membrane which is generated by electron transport complexes of the respiratory chain. F-type ATPases consist of two structural domains, F(1) - containing the extramembraneous catalytic core, and F(0) - containing the membrane proton channel, linked together by a central stalk and a peripheral stalk. During catalysis, ATP synthesis in the catalytic domain of F(1) is coupled via a rotary mechanism of the central stalk subunits to proton translocation. Subunits alpha and beta form the catalytic core in F(1). Rotation of the central stalk against the surrounding alpha(3)beta(3) subunits leads to hydrolysis of ATP in three separate catalytic sites on the beta subunits.</text>
</comment>
<comment type="catalytic activity">
    <reaction>
        <text>ATP + H2O + 4 H(+)(in) = ADP + phosphate + 5 H(+)(out)</text>
        <dbReference type="Rhea" id="RHEA:57720"/>
        <dbReference type="ChEBI" id="CHEBI:15377"/>
        <dbReference type="ChEBI" id="CHEBI:15378"/>
        <dbReference type="ChEBI" id="CHEBI:30616"/>
        <dbReference type="ChEBI" id="CHEBI:43474"/>
        <dbReference type="ChEBI" id="CHEBI:456216"/>
        <dbReference type="EC" id="7.1.2.2"/>
    </reaction>
</comment>
<comment type="subunit">
    <text>F-type ATPases have 2 components, CF(1) - the catalytic core - and CF(0) - the membrane proton channel. CF(1) has five subunits: alpha(3), beta(3), gamma(1), delta(1), epsilon(1). CF(0) has three main subunits: a, b and c.</text>
</comment>
<comment type="subcellular location">
    <subcellularLocation>
        <location>Mitochondrion</location>
    </subcellularLocation>
    <subcellularLocation>
        <location>Mitochondrion inner membrane</location>
    </subcellularLocation>
    <text>Peripheral membrane protein.</text>
</comment>
<comment type="similarity">
    <text evidence="2">Belongs to the ATPase alpha/beta chains family.</text>
</comment>
<name>ATPB_HEMPU</name>
<keyword id="KW-0066">ATP synthesis</keyword>
<keyword id="KW-0067">ATP-binding</keyword>
<keyword id="KW-0139">CF(1)</keyword>
<keyword id="KW-0375">Hydrogen ion transport</keyword>
<keyword id="KW-0406">Ion transport</keyword>
<keyword id="KW-0472">Membrane</keyword>
<keyword id="KW-0496">Mitochondrion</keyword>
<keyword id="KW-0999">Mitochondrion inner membrane</keyword>
<keyword id="KW-0547">Nucleotide-binding</keyword>
<keyword id="KW-0809">Transit peptide</keyword>
<keyword id="KW-1278">Translocase</keyword>
<keyword id="KW-0813">Transport</keyword>